<gene>
    <name type="primary">P2</name>
</gene>
<sequence>MNLFSPRTGLSPTETQELLYAYTGPAPVAYGTRTRAVLENVLRPYKYFYKEENVPQALHIKTGQKGPEEISTTSPSSGFHRDSVILLSRELKAKYPEAFERLKAWIDCELLEMEYAELSKGRQTLSFLRNRNQPAPIALEETIEYLQQNLGRPIGQSMLSYLRAVMEVLAMPKTTFTYEVATNLARFDFEEYDDGETGPLMMHFEKEKKKITITITQAELWEKTCTLGTMWKHLERGRLNRRTIATPSMLARGFVKIVEDAARVLLECLPSSGVPVGGEEKLAKLSSKLEAVSEVTGELSGDQEKFNECLDPDAMRLMWTVFLEDYPQWVKELFNIPFLIFKAKIADIGEGLTYQKEGVVRVFPFGEMPSEFDELLPNAIKDKEGKIVGIRCTLGMFMGMFNLSSTLLALIAADRSEITGDHVESSDDFIHFFKAKSYDDMFKQAELLRWSLKLVGINMSPSKCILISPAGIGEFNSKYHHRDFVGNVATDLPSLVPGGKNPSSDLAMGLNVIRHSINTNQMNFISGDLALRIFTKAYRHSYMAEGITRRTKFLEAFKKDPVLLNQGAPTVHSVSTLHLDEVCLRYQMHLLGEEELRRIMNPSNPITARTEEVVSFRPEGKLPMILEDNSVGSCFKYTFTRNRTVTDKPHRVLLEKEQQYQKITSFVEECFPELTIGNTTMPGTVKQACKRRLEYIIEQSDLPTEQKRALLEEMDS</sequence>
<accession>P27153</accession>
<reference key="1">
    <citation type="journal article" date="1991" name="Virology">
        <title>Evolutionary relatedness of the predicted gene product of RNA segment 2 of the tick-borne Dhori virus and the PB1 polymerase gene of influenza viruses.</title>
        <authorList>
            <person name="Lin D.A."/>
            <person name="Roychoudhury S."/>
            <person name="Palese P."/>
            <person name="Clay W.C."/>
            <person name="Fuller F.J."/>
        </authorList>
    </citation>
    <scope>NUCLEOTIDE SEQUENCE [GENOMIC RNA]</scope>
</reference>
<comment type="catalytic activity">
    <reaction evidence="1">
        <text>RNA(n) + a ribonucleoside 5'-triphosphate = RNA(n+1) + diphosphate</text>
        <dbReference type="Rhea" id="RHEA:21248"/>
        <dbReference type="Rhea" id="RHEA-COMP:14527"/>
        <dbReference type="Rhea" id="RHEA-COMP:17342"/>
        <dbReference type="ChEBI" id="CHEBI:33019"/>
        <dbReference type="ChEBI" id="CHEBI:61557"/>
        <dbReference type="ChEBI" id="CHEBI:140395"/>
        <dbReference type="EC" id="2.7.7.48"/>
    </reaction>
</comment>
<comment type="subunit">
    <text>RNA polymerase is composed of three subunits: PA, PB1 and PB2.</text>
</comment>
<comment type="similarity">
    <text evidence="2">Belongs to the influenza viruses polymerase PB1 family.</text>
</comment>
<organism>
    <name type="scientific">Dhori virus (strain Indian/1313/61)</name>
    <name type="common">Dho</name>
    <dbReference type="NCBI Taxonomy" id="11319"/>
    <lineage>
        <taxon>Viruses</taxon>
        <taxon>Riboviria</taxon>
        <taxon>Orthornavirae</taxon>
        <taxon>Negarnaviricota</taxon>
        <taxon>Polyploviricotina</taxon>
        <taxon>Insthoviricetes</taxon>
        <taxon>Articulavirales</taxon>
        <taxon>Orthomyxoviridae</taxon>
        <taxon>Thogotovirus</taxon>
        <taxon>Thogotovirus dhoriense</taxon>
    </lineage>
</organism>
<keyword id="KW-0547">Nucleotide-binding</keyword>
<keyword id="KW-0548">Nucleotidyltransferase</keyword>
<keyword id="KW-0696">RNA-directed RNA polymerase</keyword>
<keyword id="KW-0808">Transferase</keyword>
<keyword id="KW-0693">Viral RNA replication</keyword>
<organismHost>
    <name type="scientific">Homo sapiens</name>
    <name type="common">Human</name>
    <dbReference type="NCBI Taxonomy" id="9606"/>
</organismHost>
<organismHost>
    <name type="scientific">Ixodida</name>
    <name type="common">ticks</name>
    <dbReference type="NCBI Taxonomy" id="6935"/>
</organismHost>
<dbReference type="EC" id="2.7.7.48"/>
<dbReference type="EMBL" id="M65866">
    <property type="protein sequence ID" value="AAA42968.1"/>
    <property type="molecule type" value="Genomic_RNA"/>
</dbReference>
<dbReference type="PIR" id="A39145">
    <property type="entry name" value="P1IVDV"/>
</dbReference>
<dbReference type="SMR" id="P27153"/>
<dbReference type="IntAct" id="P27153">
    <property type="interactions" value="2"/>
</dbReference>
<dbReference type="GO" id="GO:0000166">
    <property type="term" value="F:nucleotide binding"/>
    <property type="evidence" value="ECO:0007669"/>
    <property type="project" value="UniProtKB-KW"/>
</dbReference>
<dbReference type="GO" id="GO:0003723">
    <property type="term" value="F:RNA binding"/>
    <property type="evidence" value="ECO:0007669"/>
    <property type="project" value="InterPro"/>
</dbReference>
<dbReference type="GO" id="GO:0003968">
    <property type="term" value="F:RNA-directed RNA polymerase activity"/>
    <property type="evidence" value="ECO:0007669"/>
    <property type="project" value="UniProtKB-KW"/>
</dbReference>
<dbReference type="GO" id="GO:0039694">
    <property type="term" value="P:viral RNA genome replication"/>
    <property type="evidence" value="ECO:0007669"/>
    <property type="project" value="InterPro"/>
</dbReference>
<dbReference type="InterPro" id="IPR007099">
    <property type="entry name" value="RNA-dir_pol_NSvirus"/>
</dbReference>
<dbReference type="InterPro" id="IPR001407">
    <property type="entry name" value="RNA_pol_PB1_influenza"/>
</dbReference>
<dbReference type="Pfam" id="PF00602">
    <property type="entry name" value="Flu_PB1"/>
    <property type="match status" value="1"/>
</dbReference>
<dbReference type="PIRSF" id="PIRSF000827">
    <property type="entry name" value="RdRPol_OMV"/>
    <property type="match status" value="1"/>
</dbReference>
<dbReference type="PROSITE" id="PS50525">
    <property type="entry name" value="RDRP_SSRNA_NEG_SEG"/>
    <property type="match status" value="1"/>
</dbReference>
<name>RDRP_DHVI1</name>
<feature type="chain" id="PRO_0000078777" description="RNA-directed RNA polymerase catalytic subunit">
    <location>
        <begin position="1"/>
        <end position="716"/>
    </location>
</feature>
<feature type="domain" description="RdRp catalytic" evidence="1">
    <location>
        <begin position="286"/>
        <end position="465"/>
    </location>
</feature>
<evidence type="ECO:0000255" key="1">
    <source>
        <dbReference type="PROSITE-ProRule" id="PRU00539"/>
    </source>
</evidence>
<evidence type="ECO:0000305" key="2"/>
<protein>
    <recommendedName>
        <fullName>RNA-directed RNA polymerase catalytic subunit</fullName>
        <ecNumber>2.7.7.48</ecNumber>
    </recommendedName>
    <alternativeName>
        <fullName>RNA-directed RNA polymerase subunit P2</fullName>
    </alternativeName>
</protein>
<proteinExistence type="inferred from homology"/>